<organism>
    <name type="scientific">Staphylococcus aureus (strain NCTC 8325 / PS 47)</name>
    <dbReference type="NCBI Taxonomy" id="93061"/>
    <lineage>
        <taxon>Bacteria</taxon>
        <taxon>Bacillati</taxon>
        <taxon>Bacillota</taxon>
        <taxon>Bacilli</taxon>
        <taxon>Bacillales</taxon>
        <taxon>Staphylococcaceae</taxon>
        <taxon>Staphylococcus</taxon>
    </lineage>
</organism>
<accession>Q2FUQ0</accession>
<proteinExistence type="evidence at protein level"/>
<protein>
    <recommendedName>
        <fullName evidence="1">Large ribosomal subunit protein bL34</fullName>
    </recommendedName>
    <alternativeName>
        <fullName evidence="3">50S ribosomal protein L34</fullName>
    </alternativeName>
</protein>
<keyword id="KW-0002">3D-structure</keyword>
<keyword id="KW-1185">Reference proteome</keyword>
<keyword id="KW-0687">Ribonucleoprotein</keyword>
<keyword id="KW-0689">Ribosomal protein</keyword>
<comment type="similarity">
    <text evidence="1">Belongs to the bacterial ribosomal protein bL34 family.</text>
</comment>
<evidence type="ECO:0000255" key="1">
    <source>
        <dbReference type="HAMAP-Rule" id="MF_00391"/>
    </source>
</evidence>
<evidence type="ECO:0000256" key="2">
    <source>
        <dbReference type="SAM" id="MobiDB-lite"/>
    </source>
</evidence>
<evidence type="ECO:0000305" key="3"/>
<evidence type="ECO:0007829" key="4">
    <source>
        <dbReference type="PDB" id="7ASM"/>
    </source>
</evidence>
<reference key="1">
    <citation type="book" date="2006" name="Gram positive pathogens, 2nd edition">
        <title>The Staphylococcus aureus NCTC 8325 genome.</title>
        <editorList>
            <person name="Fischetti V."/>
            <person name="Novick R."/>
            <person name="Ferretti J."/>
            <person name="Portnoy D."/>
            <person name="Rood J."/>
        </editorList>
        <authorList>
            <person name="Gillaspy A.F."/>
            <person name="Worrell V."/>
            <person name="Orvis J."/>
            <person name="Roe B.A."/>
            <person name="Dyer D.W."/>
            <person name="Iandolo J.J."/>
        </authorList>
    </citation>
    <scope>NUCLEOTIDE SEQUENCE [LARGE SCALE GENOMIC DNA]</scope>
    <source>
        <strain>NCTC 8325 / PS 47</strain>
    </source>
</reference>
<feature type="chain" id="PRO_1000013457" description="Large ribosomal subunit protein bL34">
    <location>
        <begin position="1"/>
        <end position="45"/>
    </location>
</feature>
<feature type="region of interest" description="Disordered" evidence="2">
    <location>
        <begin position="1"/>
        <end position="45"/>
    </location>
</feature>
<feature type="helix" evidence="4">
    <location>
        <begin position="10"/>
        <end position="16"/>
    </location>
</feature>
<feature type="helix" evidence="4">
    <location>
        <begin position="19"/>
        <end position="23"/>
    </location>
</feature>
<feature type="helix" evidence="4">
    <location>
        <begin position="26"/>
        <end position="38"/>
    </location>
</feature>
<dbReference type="EMBL" id="CP000253">
    <property type="protein sequence ID" value="ABD32037.1"/>
    <property type="molecule type" value="Genomic_DNA"/>
</dbReference>
<dbReference type="RefSeq" id="WP_000240855.1">
    <property type="nucleotide sequence ID" value="NZ_LS483365.1"/>
</dbReference>
<dbReference type="RefSeq" id="YP_501500.1">
    <property type="nucleotide sequence ID" value="NC_007795.1"/>
</dbReference>
<dbReference type="PDB" id="4WCE">
    <property type="method" value="X-ray"/>
    <property type="resolution" value="3.53 A"/>
    <property type="chains" value="2=1-45"/>
</dbReference>
<dbReference type="PDB" id="4WF9">
    <property type="method" value="X-ray"/>
    <property type="resolution" value="3.43 A"/>
    <property type="chains" value="2=1-45"/>
</dbReference>
<dbReference type="PDB" id="4WFA">
    <property type="method" value="X-ray"/>
    <property type="resolution" value="3.39 A"/>
    <property type="chains" value="2=1-45"/>
</dbReference>
<dbReference type="PDB" id="4WFB">
    <property type="method" value="X-ray"/>
    <property type="resolution" value="3.43 A"/>
    <property type="chains" value="2=1-45"/>
</dbReference>
<dbReference type="PDB" id="5HKV">
    <property type="method" value="X-ray"/>
    <property type="resolution" value="3.66 A"/>
    <property type="chains" value="2=1-45"/>
</dbReference>
<dbReference type="PDB" id="5HL7">
    <property type="method" value="X-ray"/>
    <property type="resolution" value="3.55 A"/>
    <property type="chains" value="2=1-45"/>
</dbReference>
<dbReference type="PDB" id="5LI0">
    <property type="method" value="EM"/>
    <property type="resolution" value="3.80 A"/>
    <property type="chains" value="6=2-45"/>
</dbReference>
<dbReference type="PDB" id="5ND8">
    <property type="method" value="EM"/>
    <property type="resolution" value="3.70 A"/>
    <property type="chains" value="6=1-45"/>
</dbReference>
<dbReference type="PDB" id="5ND9">
    <property type="method" value="EM"/>
    <property type="resolution" value="3.70 A"/>
    <property type="chains" value="6=1-45"/>
</dbReference>
<dbReference type="PDB" id="5NRG">
    <property type="method" value="X-ray"/>
    <property type="resolution" value="3.44 A"/>
    <property type="chains" value="2=1-45"/>
</dbReference>
<dbReference type="PDB" id="5TCU">
    <property type="method" value="EM"/>
    <property type="resolution" value="3.90 A"/>
    <property type="chains" value="LG=2-44"/>
</dbReference>
<dbReference type="PDB" id="6HMA">
    <property type="method" value="EM"/>
    <property type="resolution" value="2.65 A"/>
    <property type="chains" value="2=2-44"/>
</dbReference>
<dbReference type="PDB" id="6SJ6">
    <property type="method" value="EM"/>
    <property type="resolution" value="3.23 A"/>
    <property type="chains" value="6=1-45"/>
</dbReference>
<dbReference type="PDB" id="6WQN">
    <property type="method" value="EM"/>
    <property type="resolution" value="2.90 A"/>
    <property type="chains" value="P=1-45"/>
</dbReference>
<dbReference type="PDB" id="6WQQ">
    <property type="method" value="EM"/>
    <property type="resolution" value="3.10 A"/>
    <property type="chains" value="P=1-45"/>
</dbReference>
<dbReference type="PDB" id="6WRS">
    <property type="method" value="EM"/>
    <property type="resolution" value="3.20 A"/>
    <property type="chains" value="P=1-45"/>
</dbReference>
<dbReference type="PDB" id="6WRU">
    <property type="method" value="EM"/>
    <property type="resolution" value="3.10 A"/>
    <property type="chains" value="P=1-45"/>
</dbReference>
<dbReference type="PDB" id="6YEF">
    <property type="method" value="EM"/>
    <property type="resolution" value="3.20 A"/>
    <property type="chains" value="6=1-45"/>
</dbReference>
<dbReference type="PDB" id="7ASM">
    <property type="method" value="EM"/>
    <property type="resolution" value="2.48 A"/>
    <property type="chains" value="2=2-44"/>
</dbReference>
<dbReference type="PDB" id="7ASN">
    <property type="method" value="EM"/>
    <property type="resolution" value="2.73 A"/>
    <property type="chains" value="2=2-44"/>
</dbReference>
<dbReference type="PDB" id="7NHL">
    <property type="method" value="EM"/>
    <property type="resolution" value="3.10 A"/>
    <property type="chains" value="7=1-45"/>
</dbReference>
<dbReference type="PDB" id="7NHM">
    <property type="method" value="EM"/>
    <property type="resolution" value="3.10 A"/>
    <property type="chains" value="7=1-45"/>
</dbReference>
<dbReference type="PDB" id="7TTU">
    <property type="method" value="EM"/>
    <property type="resolution" value="3.00 A"/>
    <property type="chains" value="P=1-45"/>
</dbReference>
<dbReference type="PDB" id="7TTW">
    <property type="method" value="EM"/>
    <property type="resolution" value="2.90 A"/>
    <property type="chains" value="P=1-45"/>
</dbReference>
<dbReference type="PDB" id="8P2F">
    <property type="method" value="EM"/>
    <property type="resolution" value="2.44 A"/>
    <property type="chains" value="7=1-45"/>
</dbReference>
<dbReference type="PDB" id="8P2G">
    <property type="method" value="EM"/>
    <property type="resolution" value="2.02 A"/>
    <property type="chains" value="7=1-45"/>
</dbReference>
<dbReference type="PDB" id="8P2H">
    <property type="method" value="EM"/>
    <property type="resolution" value="2.49 A"/>
    <property type="chains" value="7=1-45"/>
</dbReference>
<dbReference type="PDBsum" id="4WCE"/>
<dbReference type="PDBsum" id="4WF9"/>
<dbReference type="PDBsum" id="4WFA"/>
<dbReference type="PDBsum" id="4WFB"/>
<dbReference type="PDBsum" id="5HKV"/>
<dbReference type="PDBsum" id="5HL7"/>
<dbReference type="PDBsum" id="5LI0"/>
<dbReference type="PDBsum" id="5ND8"/>
<dbReference type="PDBsum" id="5ND9"/>
<dbReference type="PDBsum" id="5NRG"/>
<dbReference type="PDBsum" id="5TCU"/>
<dbReference type="PDBsum" id="6HMA"/>
<dbReference type="PDBsum" id="6SJ6"/>
<dbReference type="PDBsum" id="6WQN"/>
<dbReference type="PDBsum" id="6WQQ"/>
<dbReference type="PDBsum" id="6WRS"/>
<dbReference type="PDBsum" id="6WRU"/>
<dbReference type="PDBsum" id="6YEF"/>
<dbReference type="PDBsum" id="7ASM"/>
<dbReference type="PDBsum" id="7ASN"/>
<dbReference type="PDBsum" id="7NHL"/>
<dbReference type="PDBsum" id="7NHM"/>
<dbReference type="PDBsum" id="7TTU"/>
<dbReference type="PDBsum" id="7TTW"/>
<dbReference type="PDBsum" id="8P2F"/>
<dbReference type="PDBsum" id="8P2G"/>
<dbReference type="PDBsum" id="8P2H"/>
<dbReference type="EMDB" id="EMD-10212"/>
<dbReference type="EMDB" id="EMD-10791"/>
<dbReference type="EMDB" id="EMD-12332"/>
<dbReference type="EMDB" id="EMD-12333"/>
<dbReference type="EMDB" id="EMD-17363"/>
<dbReference type="EMDB" id="EMD-17364"/>
<dbReference type="EMDB" id="EMD-17365"/>
<dbReference type="EMDB" id="EMD-3624"/>
<dbReference type="EMDB" id="EMD-3625"/>
<dbReference type="EMDB" id="EMD-4050"/>
<dbReference type="EMDB" id="EMD-8402"/>
<dbReference type="SMR" id="Q2FUQ0"/>
<dbReference type="IntAct" id="Q2FUQ0">
    <property type="interactions" value="1"/>
</dbReference>
<dbReference type="STRING" id="93061.SAOUHSC_03055"/>
<dbReference type="PaxDb" id="1280-SAXN108_2992"/>
<dbReference type="GeneID" id="3921318"/>
<dbReference type="GeneID" id="98347025"/>
<dbReference type="KEGG" id="sao:SAOUHSC_03055"/>
<dbReference type="PATRIC" id="fig|93061.5.peg.2760"/>
<dbReference type="eggNOG" id="COG0230">
    <property type="taxonomic scope" value="Bacteria"/>
</dbReference>
<dbReference type="HOGENOM" id="CLU_129938_2_0_9"/>
<dbReference type="EvolutionaryTrace" id="Q2FUQ0"/>
<dbReference type="PRO" id="PR:Q2FUQ0"/>
<dbReference type="Proteomes" id="UP000008816">
    <property type="component" value="Chromosome"/>
</dbReference>
<dbReference type="GO" id="GO:1990904">
    <property type="term" value="C:ribonucleoprotein complex"/>
    <property type="evidence" value="ECO:0007669"/>
    <property type="project" value="UniProtKB-KW"/>
</dbReference>
<dbReference type="GO" id="GO:0005840">
    <property type="term" value="C:ribosome"/>
    <property type="evidence" value="ECO:0007669"/>
    <property type="project" value="UniProtKB-KW"/>
</dbReference>
<dbReference type="GO" id="GO:0003735">
    <property type="term" value="F:structural constituent of ribosome"/>
    <property type="evidence" value="ECO:0007669"/>
    <property type="project" value="InterPro"/>
</dbReference>
<dbReference type="GO" id="GO:0006412">
    <property type="term" value="P:translation"/>
    <property type="evidence" value="ECO:0007669"/>
    <property type="project" value="UniProtKB-UniRule"/>
</dbReference>
<dbReference type="FunFam" id="1.10.287.3980:FF:000001">
    <property type="entry name" value="Mitochondrial ribosomal protein L34"/>
    <property type="match status" value="1"/>
</dbReference>
<dbReference type="Gene3D" id="1.10.287.3980">
    <property type="match status" value="1"/>
</dbReference>
<dbReference type="HAMAP" id="MF_00391">
    <property type="entry name" value="Ribosomal_bL34"/>
    <property type="match status" value="1"/>
</dbReference>
<dbReference type="InterPro" id="IPR000271">
    <property type="entry name" value="Ribosomal_bL34"/>
</dbReference>
<dbReference type="InterPro" id="IPR020939">
    <property type="entry name" value="Ribosomal_bL34_CS"/>
</dbReference>
<dbReference type="NCBIfam" id="TIGR01030">
    <property type="entry name" value="rpmH_bact"/>
    <property type="match status" value="1"/>
</dbReference>
<dbReference type="PANTHER" id="PTHR14503:SF4">
    <property type="entry name" value="LARGE RIBOSOMAL SUBUNIT PROTEIN BL34M"/>
    <property type="match status" value="1"/>
</dbReference>
<dbReference type="PANTHER" id="PTHR14503">
    <property type="entry name" value="MITOCHONDRIAL RIBOSOMAL PROTEIN 34 FAMILY MEMBER"/>
    <property type="match status" value="1"/>
</dbReference>
<dbReference type="Pfam" id="PF00468">
    <property type="entry name" value="Ribosomal_L34"/>
    <property type="match status" value="1"/>
</dbReference>
<dbReference type="PROSITE" id="PS00784">
    <property type="entry name" value="RIBOSOMAL_L34"/>
    <property type="match status" value="1"/>
</dbReference>
<sequence>MVKRTYQPNKRKHSKVHGFRKRMSTKNGRKVLARRRRKGRKVLSA</sequence>
<name>RL34_STAA8</name>
<gene>
    <name evidence="1" type="primary">rpmH</name>
    <name type="ordered locus">SAOUHSC_03055</name>
</gene>